<reference key="1">
    <citation type="journal article" date="2008" name="J. Bacteriol.">
        <title>Comparative genome sequence analysis of multidrug-resistant Acinetobacter baumannii.</title>
        <authorList>
            <person name="Adams M.D."/>
            <person name="Goglin K."/>
            <person name="Molyneaux N."/>
            <person name="Hujer K.M."/>
            <person name="Lavender H."/>
            <person name="Jamison J.J."/>
            <person name="MacDonald I.J."/>
            <person name="Martin K.M."/>
            <person name="Russo T."/>
            <person name="Campagnari A.A."/>
            <person name="Hujer A.M."/>
            <person name="Bonomo R.A."/>
            <person name="Gill S.R."/>
        </authorList>
    </citation>
    <scope>NUCLEOTIDE SEQUENCE [LARGE SCALE GENOMIC DNA]</scope>
    <source>
        <strain>AB0057</strain>
    </source>
</reference>
<dbReference type="EC" id="6.1.1.15" evidence="1"/>
<dbReference type="EMBL" id="CP001182">
    <property type="protein sequence ID" value="ACJ41897.1"/>
    <property type="molecule type" value="Genomic_DNA"/>
</dbReference>
<dbReference type="RefSeq" id="WP_001202759.1">
    <property type="nucleotide sequence ID" value="NC_011586.2"/>
</dbReference>
<dbReference type="SMR" id="B7I854"/>
<dbReference type="KEGG" id="abn:AB57_3319"/>
<dbReference type="HOGENOM" id="CLU_016739_0_0_6"/>
<dbReference type="Proteomes" id="UP000007094">
    <property type="component" value="Chromosome"/>
</dbReference>
<dbReference type="GO" id="GO:0005829">
    <property type="term" value="C:cytosol"/>
    <property type="evidence" value="ECO:0007669"/>
    <property type="project" value="TreeGrafter"/>
</dbReference>
<dbReference type="GO" id="GO:0002161">
    <property type="term" value="F:aminoacyl-tRNA deacylase activity"/>
    <property type="evidence" value="ECO:0007669"/>
    <property type="project" value="InterPro"/>
</dbReference>
<dbReference type="GO" id="GO:0005524">
    <property type="term" value="F:ATP binding"/>
    <property type="evidence" value="ECO:0007669"/>
    <property type="project" value="UniProtKB-UniRule"/>
</dbReference>
<dbReference type="GO" id="GO:0004827">
    <property type="term" value="F:proline-tRNA ligase activity"/>
    <property type="evidence" value="ECO:0007669"/>
    <property type="project" value="UniProtKB-UniRule"/>
</dbReference>
<dbReference type="GO" id="GO:0006433">
    <property type="term" value="P:prolyl-tRNA aminoacylation"/>
    <property type="evidence" value="ECO:0007669"/>
    <property type="project" value="UniProtKB-UniRule"/>
</dbReference>
<dbReference type="CDD" id="cd04334">
    <property type="entry name" value="ProRS-INS"/>
    <property type="match status" value="1"/>
</dbReference>
<dbReference type="CDD" id="cd00861">
    <property type="entry name" value="ProRS_anticodon_short"/>
    <property type="match status" value="1"/>
</dbReference>
<dbReference type="CDD" id="cd00779">
    <property type="entry name" value="ProRS_core_prok"/>
    <property type="match status" value="1"/>
</dbReference>
<dbReference type="FunFam" id="3.30.930.10:FF:000043">
    <property type="entry name" value="Proline--tRNA ligase"/>
    <property type="match status" value="1"/>
</dbReference>
<dbReference type="FunFam" id="3.30.930.10:FF:000097">
    <property type="entry name" value="Proline--tRNA ligase"/>
    <property type="match status" value="1"/>
</dbReference>
<dbReference type="Gene3D" id="3.40.50.800">
    <property type="entry name" value="Anticodon-binding domain"/>
    <property type="match status" value="1"/>
</dbReference>
<dbReference type="Gene3D" id="3.30.930.10">
    <property type="entry name" value="Bira Bifunctional Protein, Domain 2"/>
    <property type="match status" value="2"/>
</dbReference>
<dbReference type="HAMAP" id="MF_01569">
    <property type="entry name" value="Pro_tRNA_synth_type1"/>
    <property type="match status" value="1"/>
</dbReference>
<dbReference type="InterPro" id="IPR002314">
    <property type="entry name" value="aa-tRNA-synt_IIb"/>
</dbReference>
<dbReference type="InterPro" id="IPR006195">
    <property type="entry name" value="aa-tRNA-synth_II"/>
</dbReference>
<dbReference type="InterPro" id="IPR045864">
    <property type="entry name" value="aa-tRNA-synth_II/BPL/LPL"/>
</dbReference>
<dbReference type="InterPro" id="IPR004154">
    <property type="entry name" value="Anticodon-bd"/>
</dbReference>
<dbReference type="InterPro" id="IPR036621">
    <property type="entry name" value="Anticodon-bd_dom_sf"/>
</dbReference>
<dbReference type="InterPro" id="IPR002316">
    <property type="entry name" value="Pro-tRNA-ligase_IIa"/>
</dbReference>
<dbReference type="InterPro" id="IPR004500">
    <property type="entry name" value="Pro-tRNA-synth_IIa_bac-type"/>
</dbReference>
<dbReference type="InterPro" id="IPR023717">
    <property type="entry name" value="Pro-tRNA-Synthase_IIa_type1"/>
</dbReference>
<dbReference type="InterPro" id="IPR050062">
    <property type="entry name" value="Pro-tRNA_synthetase"/>
</dbReference>
<dbReference type="InterPro" id="IPR044140">
    <property type="entry name" value="ProRS_anticodon_short"/>
</dbReference>
<dbReference type="InterPro" id="IPR033730">
    <property type="entry name" value="ProRS_core_prok"/>
</dbReference>
<dbReference type="InterPro" id="IPR036754">
    <property type="entry name" value="YbaK/aa-tRNA-synt-asso_dom_sf"/>
</dbReference>
<dbReference type="InterPro" id="IPR007214">
    <property type="entry name" value="YbaK/aa-tRNA-synth-assoc-dom"/>
</dbReference>
<dbReference type="NCBIfam" id="NF006625">
    <property type="entry name" value="PRK09194.1"/>
    <property type="match status" value="1"/>
</dbReference>
<dbReference type="NCBIfam" id="TIGR00409">
    <property type="entry name" value="proS_fam_II"/>
    <property type="match status" value="1"/>
</dbReference>
<dbReference type="PANTHER" id="PTHR42753">
    <property type="entry name" value="MITOCHONDRIAL RIBOSOME PROTEIN L39/PROLYL-TRNA LIGASE FAMILY MEMBER"/>
    <property type="match status" value="1"/>
</dbReference>
<dbReference type="PANTHER" id="PTHR42753:SF2">
    <property type="entry name" value="PROLINE--TRNA LIGASE"/>
    <property type="match status" value="1"/>
</dbReference>
<dbReference type="Pfam" id="PF03129">
    <property type="entry name" value="HGTP_anticodon"/>
    <property type="match status" value="1"/>
</dbReference>
<dbReference type="Pfam" id="PF00587">
    <property type="entry name" value="tRNA-synt_2b"/>
    <property type="match status" value="1"/>
</dbReference>
<dbReference type="Pfam" id="PF04073">
    <property type="entry name" value="tRNA_edit"/>
    <property type="match status" value="1"/>
</dbReference>
<dbReference type="PIRSF" id="PIRSF001535">
    <property type="entry name" value="ProRS_1"/>
    <property type="match status" value="1"/>
</dbReference>
<dbReference type="PRINTS" id="PR01046">
    <property type="entry name" value="TRNASYNTHPRO"/>
</dbReference>
<dbReference type="SUPFAM" id="SSF52954">
    <property type="entry name" value="Class II aaRS ABD-related"/>
    <property type="match status" value="1"/>
</dbReference>
<dbReference type="SUPFAM" id="SSF55681">
    <property type="entry name" value="Class II aaRS and biotin synthetases"/>
    <property type="match status" value="1"/>
</dbReference>
<dbReference type="SUPFAM" id="SSF55826">
    <property type="entry name" value="YbaK/ProRS associated domain"/>
    <property type="match status" value="1"/>
</dbReference>
<dbReference type="PROSITE" id="PS50862">
    <property type="entry name" value="AA_TRNA_LIGASE_II"/>
    <property type="match status" value="1"/>
</dbReference>
<protein>
    <recommendedName>
        <fullName evidence="1">Proline--tRNA ligase</fullName>
        <ecNumber evidence="1">6.1.1.15</ecNumber>
    </recommendedName>
    <alternativeName>
        <fullName evidence="1">Prolyl-tRNA synthetase</fullName>
        <shortName evidence="1">ProRS</shortName>
    </alternativeName>
</protein>
<comment type="function">
    <text evidence="1">Catalyzes the attachment of proline to tRNA(Pro) in a two-step reaction: proline is first activated by ATP to form Pro-AMP and then transferred to the acceptor end of tRNA(Pro). As ProRS can inadvertently accommodate and process non-cognate amino acids such as alanine and cysteine, to avoid such errors it has two additional distinct editing activities against alanine. One activity is designated as 'pretransfer' editing and involves the tRNA(Pro)-independent hydrolysis of activated Ala-AMP. The other activity is designated 'posttransfer' editing and involves deacylation of mischarged Ala-tRNA(Pro). The misacylated Cys-tRNA(Pro) is not edited by ProRS.</text>
</comment>
<comment type="catalytic activity">
    <reaction evidence="1">
        <text>tRNA(Pro) + L-proline + ATP = L-prolyl-tRNA(Pro) + AMP + diphosphate</text>
        <dbReference type="Rhea" id="RHEA:14305"/>
        <dbReference type="Rhea" id="RHEA-COMP:9700"/>
        <dbReference type="Rhea" id="RHEA-COMP:9702"/>
        <dbReference type="ChEBI" id="CHEBI:30616"/>
        <dbReference type="ChEBI" id="CHEBI:33019"/>
        <dbReference type="ChEBI" id="CHEBI:60039"/>
        <dbReference type="ChEBI" id="CHEBI:78442"/>
        <dbReference type="ChEBI" id="CHEBI:78532"/>
        <dbReference type="ChEBI" id="CHEBI:456215"/>
        <dbReference type="EC" id="6.1.1.15"/>
    </reaction>
</comment>
<comment type="subunit">
    <text evidence="1">Homodimer.</text>
</comment>
<comment type="subcellular location">
    <subcellularLocation>
        <location evidence="1">Cytoplasm</location>
    </subcellularLocation>
</comment>
<comment type="domain">
    <text evidence="1">Consists of three domains: the N-terminal catalytic domain, the editing domain and the C-terminal anticodon-binding domain.</text>
</comment>
<comment type="similarity">
    <text evidence="1">Belongs to the class-II aminoacyl-tRNA synthetase family. ProS type 1 subfamily.</text>
</comment>
<name>SYP_ACIB5</name>
<proteinExistence type="inferred from homology"/>
<evidence type="ECO:0000255" key="1">
    <source>
        <dbReference type="HAMAP-Rule" id="MF_01569"/>
    </source>
</evidence>
<organism>
    <name type="scientific">Acinetobacter baumannii (strain AB0057)</name>
    <dbReference type="NCBI Taxonomy" id="480119"/>
    <lineage>
        <taxon>Bacteria</taxon>
        <taxon>Pseudomonadati</taxon>
        <taxon>Pseudomonadota</taxon>
        <taxon>Gammaproteobacteria</taxon>
        <taxon>Moraxellales</taxon>
        <taxon>Moraxellaceae</taxon>
        <taxon>Acinetobacter</taxon>
        <taxon>Acinetobacter calcoaceticus/baumannii complex</taxon>
    </lineage>
</organism>
<keyword id="KW-0030">Aminoacyl-tRNA synthetase</keyword>
<keyword id="KW-0067">ATP-binding</keyword>
<keyword id="KW-0963">Cytoplasm</keyword>
<keyword id="KW-0436">Ligase</keyword>
<keyword id="KW-0547">Nucleotide-binding</keyword>
<keyword id="KW-0648">Protein biosynthesis</keyword>
<feature type="chain" id="PRO_1000199340" description="Proline--tRNA ligase">
    <location>
        <begin position="1"/>
        <end position="571"/>
    </location>
</feature>
<accession>B7I854</accession>
<sequence length="571" mass="63275">MRASRFLFATLRETPNDAEVISHQLMLRAGMIRKLASGLYTWLPMGTRVLKKVDAIVREEMNRSGAMEVFMPVTQPASLWEESGRYEQYGPELLRFKDRHDNPFVLGPTHEEVITDLARNELKSYKQLPVNFYQIQTKFRDEIRPRFGVMRSREFIMKDAYSFHATQESLQETYDVMYDTYSRIFTRLGLDFRPVQADTGSIGGSASHEFHVLAASGEDDIAFSTESDYAANVEMAEAVLVGERAAPTQEFKLVETPNQKTIADVCQFLNADPKQSVKALLVQGVADEKGNVPVVALFLRGDHELNEIKAEKHPLVAAPLAFATEEQLQAFGLTAGFTGPQGLVEKGITVIVDRAASVLSDFVAGANEADKHAIGVNWERDAQITEVFDLRNVVEGDPSPDGKGTLQIKRGIEVGHIFQLGTKYSEALGCKVLGEDGKPFTVTMGCYGIGVTRVVAAAIEQNYDDKGIIWPQAIAPFEIAIVPMNAHKSPRTLEAAEALYAELQAQGFDVLLDDRNERPGVKFSDLELMGIPHRIVIGEKGLDAGTFEYKGRRDAEASNLTKEELLAKLAR</sequence>
<gene>
    <name evidence="1" type="primary">proS</name>
    <name type="ordered locus">AB57_3319</name>
</gene>